<accession>Q5PAE6</accession>
<feature type="chain" id="PRO_0000231396" description="Deoxyuridine 5'-triphosphate nucleotidohydrolase">
    <location>
        <begin position="1"/>
        <end position="147"/>
    </location>
</feature>
<feature type="binding site" evidence="1">
    <location>
        <begin position="67"/>
        <end position="69"/>
    </location>
    <ligand>
        <name>substrate</name>
    </ligand>
</feature>
<feature type="binding site" evidence="1">
    <location>
        <position position="80"/>
    </location>
    <ligand>
        <name>substrate</name>
    </ligand>
</feature>
<feature type="binding site" evidence="1">
    <location>
        <begin position="84"/>
        <end position="86"/>
    </location>
    <ligand>
        <name>substrate</name>
    </ligand>
</feature>
<proteinExistence type="inferred from homology"/>
<keyword id="KW-0378">Hydrolase</keyword>
<keyword id="KW-0460">Magnesium</keyword>
<keyword id="KW-0479">Metal-binding</keyword>
<keyword id="KW-0546">Nucleotide metabolism</keyword>
<reference key="1">
    <citation type="journal article" date="2005" name="Proc. Natl. Acad. Sci. U.S.A.">
        <title>Complete genome sequencing of Anaplasma marginale reveals that the surface is skewed to two superfamilies of outer membrane proteins.</title>
        <authorList>
            <person name="Brayton K.A."/>
            <person name="Kappmeyer L.S."/>
            <person name="Herndon D.R."/>
            <person name="Dark M.J."/>
            <person name="Tibbals D.L."/>
            <person name="Palmer G.H."/>
            <person name="McGuire T.C."/>
            <person name="Knowles D.P. Jr."/>
        </authorList>
    </citation>
    <scope>NUCLEOTIDE SEQUENCE [LARGE SCALE GENOMIC DNA]</scope>
    <source>
        <strain>St. Maries</strain>
    </source>
</reference>
<gene>
    <name evidence="1" type="primary">dut</name>
    <name type="ordered locus">AM805</name>
</gene>
<comment type="function">
    <text evidence="1">This enzyme is involved in nucleotide metabolism: it produces dUMP, the immediate precursor of thymidine nucleotides and it decreases the intracellular concentration of dUTP so that uracil cannot be incorporated into DNA.</text>
</comment>
<comment type="catalytic activity">
    <reaction evidence="1">
        <text>dUTP + H2O = dUMP + diphosphate + H(+)</text>
        <dbReference type="Rhea" id="RHEA:10248"/>
        <dbReference type="ChEBI" id="CHEBI:15377"/>
        <dbReference type="ChEBI" id="CHEBI:15378"/>
        <dbReference type="ChEBI" id="CHEBI:33019"/>
        <dbReference type="ChEBI" id="CHEBI:61555"/>
        <dbReference type="ChEBI" id="CHEBI:246422"/>
        <dbReference type="EC" id="3.6.1.23"/>
    </reaction>
</comment>
<comment type="cofactor">
    <cofactor evidence="1">
        <name>Mg(2+)</name>
        <dbReference type="ChEBI" id="CHEBI:18420"/>
    </cofactor>
</comment>
<comment type="pathway">
    <text evidence="1">Pyrimidine metabolism; dUMP biosynthesis; dUMP from dCTP (dUTP route): step 2/2.</text>
</comment>
<comment type="similarity">
    <text evidence="1">Belongs to the dUTPase family.</text>
</comment>
<sequence length="147" mass="15464">MLKVKILRLASGYGLPLPSYATPKSAGLDLYAAVDSKLVVHPGGRCAVKTGVALELPDGYEAQIRSRSGLAANFGICVLNAPGTIDSDYRGEITVVLSNFGSEDYVISRGDRVAQMVIAPVERVEWEEVNSITATSRGEGGFGSTGT</sequence>
<evidence type="ECO:0000255" key="1">
    <source>
        <dbReference type="HAMAP-Rule" id="MF_00116"/>
    </source>
</evidence>
<dbReference type="EC" id="3.6.1.23" evidence="1"/>
<dbReference type="EMBL" id="CP000030">
    <property type="protein sequence ID" value="AAV86734.1"/>
    <property type="molecule type" value="Genomic_DNA"/>
</dbReference>
<dbReference type="RefSeq" id="WP_010270240.1">
    <property type="nucleotide sequence ID" value="NZ_AFMU01000051.1"/>
</dbReference>
<dbReference type="SMR" id="Q5PAE6"/>
<dbReference type="GeneID" id="7398040"/>
<dbReference type="KEGG" id="ama:AM805"/>
<dbReference type="PATRIC" id="fig|320483.3.peg.692"/>
<dbReference type="HOGENOM" id="CLU_068508_1_2_5"/>
<dbReference type="UniPathway" id="UPA00610">
    <property type="reaction ID" value="UER00666"/>
</dbReference>
<dbReference type="GO" id="GO:0004170">
    <property type="term" value="F:dUTP diphosphatase activity"/>
    <property type="evidence" value="ECO:0007669"/>
    <property type="project" value="UniProtKB-UniRule"/>
</dbReference>
<dbReference type="GO" id="GO:0000287">
    <property type="term" value="F:magnesium ion binding"/>
    <property type="evidence" value="ECO:0007669"/>
    <property type="project" value="UniProtKB-UniRule"/>
</dbReference>
<dbReference type="GO" id="GO:0006226">
    <property type="term" value="P:dUMP biosynthetic process"/>
    <property type="evidence" value="ECO:0007669"/>
    <property type="project" value="UniProtKB-UniRule"/>
</dbReference>
<dbReference type="GO" id="GO:0046081">
    <property type="term" value="P:dUTP catabolic process"/>
    <property type="evidence" value="ECO:0007669"/>
    <property type="project" value="InterPro"/>
</dbReference>
<dbReference type="CDD" id="cd07557">
    <property type="entry name" value="trimeric_dUTPase"/>
    <property type="match status" value="1"/>
</dbReference>
<dbReference type="FunFam" id="2.70.40.10:FF:000002">
    <property type="entry name" value="dUTP diphosphatase"/>
    <property type="match status" value="1"/>
</dbReference>
<dbReference type="Gene3D" id="2.70.40.10">
    <property type="match status" value="1"/>
</dbReference>
<dbReference type="HAMAP" id="MF_00116">
    <property type="entry name" value="dUTPase_bact"/>
    <property type="match status" value="1"/>
</dbReference>
<dbReference type="InterPro" id="IPR008181">
    <property type="entry name" value="dUTPase"/>
</dbReference>
<dbReference type="InterPro" id="IPR029054">
    <property type="entry name" value="dUTPase-like"/>
</dbReference>
<dbReference type="InterPro" id="IPR036157">
    <property type="entry name" value="dUTPase-like_sf"/>
</dbReference>
<dbReference type="InterPro" id="IPR033704">
    <property type="entry name" value="dUTPase_trimeric"/>
</dbReference>
<dbReference type="NCBIfam" id="TIGR00576">
    <property type="entry name" value="dut"/>
    <property type="match status" value="1"/>
</dbReference>
<dbReference type="NCBIfam" id="NF001862">
    <property type="entry name" value="PRK00601.1"/>
    <property type="match status" value="1"/>
</dbReference>
<dbReference type="PANTHER" id="PTHR11241">
    <property type="entry name" value="DEOXYURIDINE 5'-TRIPHOSPHATE NUCLEOTIDOHYDROLASE"/>
    <property type="match status" value="1"/>
</dbReference>
<dbReference type="PANTHER" id="PTHR11241:SF0">
    <property type="entry name" value="DEOXYURIDINE 5'-TRIPHOSPHATE NUCLEOTIDOHYDROLASE"/>
    <property type="match status" value="1"/>
</dbReference>
<dbReference type="Pfam" id="PF00692">
    <property type="entry name" value="dUTPase"/>
    <property type="match status" value="1"/>
</dbReference>
<dbReference type="SUPFAM" id="SSF51283">
    <property type="entry name" value="dUTPase-like"/>
    <property type="match status" value="1"/>
</dbReference>
<organism>
    <name type="scientific">Anaplasma marginale (strain St. Maries)</name>
    <dbReference type="NCBI Taxonomy" id="234826"/>
    <lineage>
        <taxon>Bacteria</taxon>
        <taxon>Pseudomonadati</taxon>
        <taxon>Pseudomonadota</taxon>
        <taxon>Alphaproteobacteria</taxon>
        <taxon>Rickettsiales</taxon>
        <taxon>Anaplasmataceae</taxon>
        <taxon>Anaplasma</taxon>
    </lineage>
</organism>
<protein>
    <recommendedName>
        <fullName evidence="1">Deoxyuridine 5'-triphosphate nucleotidohydrolase</fullName>
        <shortName evidence="1">dUTPase</shortName>
        <ecNumber evidence="1">3.6.1.23</ecNumber>
    </recommendedName>
    <alternativeName>
        <fullName evidence="1">dUTP pyrophosphatase</fullName>
    </alternativeName>
</protein>
<name>DUT_ANAMM</name>